<proteinExistence type="inferred from homology"/>
<accession>B7MNC1</accession>
<evidence type="ECO:0000255" key="1">
    <source>
        <dbReference type="HAMAP-Rule" id="MF_01862"/>
    </source>
</evidence>
<organism>
    <name type="scientific">Escherichia coli O45:K1 (strain S88 / ExPEC)</name>
    <dbReference type="NCBI Taxonomy" id="585035"/>
    <lineage>
        <taxon>Bacteria</taxon>
        <taxon>Pseudomonadati</taxon>
        <taxon>Pseudomonadota</taxon>
        <taxon>Gammaproteobacteria</taxon>
        <taxon>Enterobacterales</taxon>
        <taxon>Enterobacteriaceae</taxon>
        <taxon>Escherichia</taxon>
    </lineage>
</organism>
<protein>
    <recommendedName>
        <fullName evidence="1">Ribosomal RNA small subunit methyltransferase C</fullName>
        <ecNumber evidence="1">2.1.1.172</ecNumber>
    </recommendedName>
    <alternativeName>
        <fullName evidence="1">16S rRNA m2G1207 methyltransferase</fullName>
    </alternativeName>
    <alternativeName>
        <fullName evidence="1">rRNA (guanine-N(2)-)-methyltransferase RsmC</fullName>
    </alternativeName>
</protein>
<comment type="function">
    <text evidence="1">Specifically methylates the guanine in position 1207 of 16S rRNA in the 30S particle.</text>
</comment>
<comment type="catalytic activity">
    <reaction evidence="1">
        <text>guanosine(1207) in 16S rRNA + S-adenosyl-L-methionine = N(2)-methylguanosine(1207) in 16S rRNA + S-adenosyl-L-homocysteine + H(+)</text>
        <dbReference type="Rhea" id="RHEA:42736"/>
        <dbReference type="Rhea" id="RHEA-COMP:10213"/>
        <dbReference type="Rhea" id="RHEA-COMP:10214"/>
        <dbReference type="ChEBI" id="CHEBI:15378"/>
        <dbReference type="ChEBI" id="CHEBI:57856"/>
        <dbReference type="ChEBI" id="CHEBI:59789"/>
        <dbReference type="ChEBI" id="CHEBI:74269"/>
        <dbReference type="ChEBI" id="CHEBI:74481"/>
        <dbReference type="EC" id="2.1.1.172"/>
    </reaction>
</comment>
<comment type="subunit">
    <text evidence="1">Monomer.</text>
</comment>
<comment type="subcellular location">
    <subcellularLocation>
        <location evidence="1">Cytoplasm</location>
    </subcellularLocation>
</comment>
<comment type="similarity">
    <text evidence="1">Belongs to the methyltransferase superfamily. RsmC family.</text>
</comment>
<keyword id="KW-0963">Cytoplasm</keyword>
<keyword id="KW-0489">Methyltransferase</keyword>
<keyword id="KW-1185">Reference proteome</keyword>
<keyword id="KW-0698">rRNA processing</keyword>
<keyword id="KW-0949">S-adenosyl-L-methionine</keyword>
<keyword id="KW-0808">Transferase</keyword>
<name>RSMC_ECO45</name>
<gene>
    <name evidence="1" type="primary">rsmC</name>
    <name type="ordered locus">ECS88_4992</name>
</gene>
<dbReference type="EC" id="2.1.1.172" evidence="1"/>
<dbReference type="EMBL" id="CU928161">
    <property type="protein sequence ID" value="CAR06134.1"/>
    <property type="molecule type" value="Genomic_DNA"/>
</dbReference>
<dbReference type="RefSeq" id="WP_001272330.1">
    <property type="nucleotide sequence ID" value="NC_011742.1"/>
</dbReference>
<dbReference type="SMR" id="B7MNC1"/>
<dbReference type="KEGG" id="ecz:ECS88_4992"/>
<dbReference type="HOGENOM" id="CLU_049581_0_1_6"/>
<dbReference type="Proteomes" id="UP000000747">
    <property type="component" value="Chromosome"/>
</dbReference>
<dbReference type="GO" id="GO:0005737">
    <property type="term" value="C:cytoplasm"/>
    <property type="evidence" value="ECO:0007669"/>
    <property type="project" value="UniProtKB-SubCell"/>
</dbReference>
<dbReference type="GO" id="GO:0052914">
    <property type="term" value="F:16S rRNA (guanine(1207)-N(2))-methyltransferase activity"/>
    <property type="evidence" value="ECO:0007669"/>
    <property type="project" value="UniProtKB-EC"/>
</dbReference>
<dbReference type="GO" id="GO:0003676">
    <property type="term" value="F:nucleic acid binding"/>
    <property type="evidence" value="ECO:0007669"/>
    <property type="project" value="InterPro"/>
</dbReference>
<dbReference type="CDD" id="cd02440">
    <property type="entry name" value="AdoMet_MTases"/>
    <property type="match status" value="1"/>
</dbReference>
<dbReference type="FunFam" id="3.40.50.150:FF:000058">
    <property type="entry name" value="Ribosomal RNA small subunit methyltransferase C"/>
    <property type="match status" value="1"/>
</dbReference>
<dbReference type="FunFam" id="3.40.50.150:FF:000063">
    <property type="entry name" value="Ribosomal RNA small subunit methyltransferase C"/>
    <property type="match status" value="1"/>
</dbReference>
<dbReference type="Gene3D" id="3.40.50.150">
    <property type="entry name" value="Vaccinia Virus protein VP39"/>
    <property type="match status" value="2"/>
</dbReference>
<dbReference type="HAMAP" id="MF_01862">
    <property type="entry name" value="16SrRNA_methyltr_C"/>
    <property type="match status" value="1"/>
</dbReference>
<dbReference type="InterPro" id="IPR002052">
    <property type="entry name" value="DNA_methylase_N6_adenine_CS"/>
</dbReference>
<dbReference type="InterPro" id="IPR013675">
    <property type="entry name" value="Mtase_sm_N"/>
</dbReference>
<dbReference type="InterPro" id="IPR023543">
    <property type="entry name" value="rRNA_ssu_MeTfrase_C"/>
</dbReference>
<dbReference type="InterPro" id="IPR046977">
    <property type="entry name" value="RsmC/RlmG"/>
</dbReference>
<dbReference type="InterPro" id="IPR029063">
    <property type="entry name" value="SAM-dependent_MTases_sf"/>
</dbReference>
<dbReference type="InterPro" id="IPR007848">
    <property type="entry name" value="Small_mtfrase_dom"/>
</dbReference>
<dbReference type="NCBIfam" id="NF007023">
    <property type="entry name" value="PRK09489.1"/>
    <property type="match status" value="1"/>
</dbReference>
<dbReference type="PANTHER" id="PTHR47816">
    <property type="entry name" value="RIBOSOMAL RNA SMALL SUBUNIT METHYLTRANSFERASE C"/>
    <property type="match status" value="1"/>
</dbReference>
<dbReference type="PANTHER" id="PTHR47816:SF4">
    <property type="entry name" value="RIBOSOMAL RNA SMALL SUBUNIT METHYLTRANSFERASE C"/>
    <property type="match status" value="1"/>
</dbReference>
<dbReference type="Pfam" id="PF05175">
    <property type="entry name" value="MTS"/>
    <property type="match status" value="1"/>
</dbReference>
<dbReference type="Pfam" id="PF08468">
    <property type="entry name" value="MTS_N"/>
    <property type="match status" value="1"/>
</dbReference>
<dbReference type="SUPFAM" id="SSF53335">
    <property type="entry name" value="S-adenosyl-L-methionine-dependent methyltransferases"/>
    <property type="match status" value="1"/>
</dbReference>
<reference key="1">
    <citation type="journal article" date="2009" name="PLoS Genet.">
        <title>Organised genome dynamics in the Escherichia coli species results in highly diverse adaptive paths.</title>
        <authorList>
            <person name="Touchon M."/>
            <person name="Hoede C."/>
            <person name="Tenaillon O."/>
            <person name="Barbe V."/>
            <person name="Baeriswyl S."/>
            <person name="Bidet P."/>
            <person name="Bingen E."/>
            <person name="Bonacorsi S."/>
            <person name="Bouchier C."/>
            <person name="Bouvet O."/>
            <person name="Calteau A."/>
            <person name="Chiapello H."/>
            <person name="Clermont O."/>
            <person name="Cruveiller S."/>
            <person name="Danchin A."/>
            <person name="Diard M."/>
            <person name="Dossat C."/>
            <person name="Karoui M.E."/>
            <person name="Frapy E."/>
            <person name="Garry L."/>
            <person name="Ghigo J.M."/>
            <person name="Gilles A.M."/>
            <person name="Johnson J."/>
            <person name="Le Bouguenec C."/>
            <person name="Lescat M."/>
            <person name="Mangenot S."/>
            <person name="Martinez-Jehanne V."/>
            <person name="Matic I."/>
            <person name="Nassif X."/>
            <person name="Oztas S."/>
            <person name="Petit M.A."/>
            <person name="Pichon C."/>
            <person name="Rouy Z."/>
            <person name="Ruf C.S."/>
            <person name="Schneider D."/>
            <person name="Tourret J."/>
            <person name="Vacherie B."/>
            <person name="Vallenet D."/>
            <person name="Medigue C."/>
            <person name="Rocha E.P.C."/>
            <person name="Denamur E."/>
        </authorList>
    </citation>
    <scope>NUCLEOTIDE SEQUENCE [LARGE SCALE GENOMIC DNA]</scope>
    <source>
        <strain>S88 / ExPEC</strain>
    </source>
</reference>
<sequence length="343" mass="37625">MSAFTPASEVLLRHSDDFEQSRILFAGDLQDDLPARLDTAASRAHTQQFHHWQVLSRQMGDNARFSLVATADDVADCDTLIYYWPKNKPEAQFQLMNLLSLLPVGTDIFVVGENRSGVRSAEQMLADYAPLNKVDSARRCGLYFGRLEKQPVFDAEKFWGEYSVDGLTVKTLPGVFSRDGLDVGSQLLLSTLTPHTKGKVLDVGCGAGVLSVAFARHSPKIRLTLCDVSAPAVEASRATLAANGVEGEVFASNVFSEVKGRFDMIISNPPFHDGMQTSLDAAQTLIRGAVRHLNSGGELRIVANAFLPYPDVLDETFGFHEVIAQTGRFKVYRAIMTRQAKKG</sequence>
<feature type="chain" id="PRO_0000369709" description="Ribosomal RNA small subunit methyltransferase C">
    <location>
        <begin position="1"/>
        <end position="343"/>
    </location>
</feature>